<feature type="chain" id="PRO_1000093435" description="Peptide chain release factor 1">
    <location>
        <begin position="1"/>
        <end position="360"/>
    </location>
</feature>
<feature type="modified residue" description="N5-methylglutamine" evidence="1">
    <location>
        <position position="237"/>
    </location>
</feature>
<comment type="function">
    <text evidence="1">Peptide chain release factor 1 directs the termination of translation in response to the peptide chain termination codons UAG and UAA.</text>
</comment>
<comment type="subcellular location">
    <subcellularLocation>
        <location evidence="1">Cytoplasm</location>
    </subcellularLocation>
</comment>
<comment type="PTM">
    <text evidence="1">Methylated by PrmC. Methylation increases the termination efficiency of RF1.</text>
</comment>
<comment type="similarity">
    <text evidence="1">Belongs to the prokaryotic/mitochondrial release factor family.</text>
</comment>
<keyword id="KW-0963">Cytoplasm</keyword>
<keyword id="KW-0488">Methylation</keyword>
<keyword id="KW-0648">Protein biosynthesis</keyword>
<keyword id="KW-1185">Reference proteome</keyword>
<reference key="1">
    <citation type="journal article" date="2008" name="J. Bacteriol.">
        <title>Insights into plant cell wall degradation from the genome sequence of the soil bacterium Cellvibrio japonicus.</title>
        <authorList>
            <person name="DeBoy R.T."/>
            <person name="Mongodin E.F."/>
            <person name="Fouts D.E."/>
            <person name="Tailford L.E."/>
            <person name="Khouri H."/>
            <person name="Emerson J.B."/>
            <person name="Mohamoud Y."/>
            <person name="Watkins K."/>
            <person name="Henrissat B."/>
            <person name="Gilbert H.J."/>
            <person name="Nelson K.E."/>
        </authorList>
    </citation>
    <scope>NUCLEOTIDE SEQUENCE [LARGE SCALE GENOMIC DNA]</scope>
    <source>
        <strain>Ueda107</strain>
    </source>
</reference>
<evidence type="ECO:0000255" key="1">
    <source>
        <dbReference type="HAMAP-Rule" id="MF_00093"/>
    </source>
</evidence>
<protein>
    <recommendedName>
        <fullName evidence="1">Peptide chain release factor 1</fullName>
        <shortName evidence="1">RF-1</shortName>
    </recommendedName>
</protein>
<proteinExistence type="inferred from homology"/>
<sequence length="360" mass="40285">MKSSILEKLERLKERYEEVSALLSEADVINNQARFRDLSKEYAELEPVVVAYKGYLQLLADIEEAKHLIAEGDADMREMAEEELEGCEARLEPTELELQKLLLPKDPNDEKNCYLEVRAGTGGDEAAIFSGDLFRMYSRYAETQGWRVEILSQSEGEHGGFKEIISLVSGSGVYSKLKFESGAHRVQRVPETESQGRIHTSACTVAVMPEADELEEVNINKADLRIDTYRASGAGGQHVNKTDSAIRITHIPTGIVVECQDERSQHKNRARAMSLLATKLKTMQEEAAHKSISEERRNLVGSGDRSERIRTYNYPQGRVTDHRINLTLYSLDAVMQGDLEPVIGPLANEYQADQLAAIAD</sequence>
<organism>
    <name type="scientific">Cellvibrio japonicus (strain Ueda107)</name>
    <name type="common">Pseudomonas fluorescens subsp. cellulosa</name>
    <dbReference type="NCBI Taxonomy" id="498211"/>
    <lineage>
        <taxon>Bacteria</taxon>
        <taxon>Pseudomonadati</taxon>
        <taxon>Pseudomonadota</taxon>
        <taxon>Gammaproteobacteria</taxon>
        <taxon>Cellvibrionales</taxon>
        <taxon>Cellvibrionaceae</taxon>
        <taxon>Cellvibrio</taxon>
    </lineage>
</organism>
<name>RF1_CELJU</name>
<dbReference type="EMBL" id="CP000934">
    <property type="protein sequence ID" value="ACE84307.1"/>
    <property type="molecule type" value="Genomic_DNA"/>
</dbReference>
<dbReference type="RefSeq" id="WP_012486328.1">
    <property type="nucleotide sequence ID" value="NC_010995.1"/>
</dbReference>
<dbReference type="SMR" id="B3PJP4"/>
<dbReference type="STRING" id="498211.CJA_0652"/>
<dbReference type="KEGG" id="cja:CJA_0652"/>
<dbReference type="eggNOG" id="COG0216">
    <property type="taxonomic scope" value="Bacteria"/>
</dbReference>
<dbReference type="HOGENOM" id="CLU_036856_0_1_6"/>
<dbReference type="OrthoDB" id="9806673at2"/>
<dbReference type="Proteomes" id="UP000001036">
    <property type="component" value="Chromosome"/>
</dbReference>
<dbReference type="GO" id="GO:0005737">
    <property type="term" value="C:cytoplasm"/>
    <property type="evidence" value="ECO:0007669"/>
    <property type="project" value="UniProtKB-SubCell"/>
</dbReference>
<dbReference type="GO" id="GO:0016149">
    <property type="term" value="F:translation release factor activity, codon specific"/>
    <property type="evidence" value="ECO:0007669"/>
    <property type="project" value="UniProtKB-UniRule"/>
</dbReference>
<dbReference type="FunFam" id="3.30.160.20:FF:000004">
    <property type="entry name" value="Peptide chain release factor 1"/>
    <property type="match status" value="1"/>
</dbReference>
<dbReference type="FunFam" id="3.30.70.1660:FF:000002">
    <property type="entry name" value="Peptide chain release factor 1"/>
    <property type="match status" value="1"/>
</dbReference>
<dbReference type="FunFam" id="3.30.70.1660:FF:000004">
    <property type="entry name" value="Peptide chain release factor 1"/>
    <property type="match status" value="1"/>
</dbReference>
<dbReference type="Gene3D" id="3.30.160.20">
    <property type="match status" value="1"/>
</dbReference>
<dbReference type="Gene3D" id="3.30.70.1660">
    <property type="match status" value="1"/>
</dbReference>
<dbReference type="Gene3D" id="6.10.140.1950">
    <property type="match status" value="1"/>
</dbReference>
<dbReference type="HAMAP" id="MF_00093">
    <property type="entry name" value="Rel_fac_1"/>
    <property type="match status" value="1"/>
</dbReference>
<dbReference type="InterPro" id="IPR005139">
    <property type="entry name" value="PCRF"/>
</dbReference>
<dbReference type="InterPro" id="IPR000352">
    <property type="entry name" value="Pep_chain_release_fac_I"/>
</dbReference>
<dbReference type="InterPro" id="IPR045853">
    <property type="entry name" value="Pep_chain_release_fac_I_sf"/>
</dbReference>
<dbReference type="InterPro" id="IPR050057">
    <property type="entry name" value="Prokaryotic/Mito_RF"/>
</dbReference>
<dbReference type="InterPro" id="IPR004373">
    <property type="entry name" value="RF-1"/>
</dbReference>
<dbReference type="NCBIfam" id="TIGR00019">
    <property type="entry name" value="prfA"/>
    <property type="match status" value="1"/>
</dbReference>
<dbReference type="NCBIfam" id="NF001859">
    <property type="entry name" value="PRK00591.1"/>
    <property type="match status" value="1"/>
</dbReference>
<dbReference type="PANTHER" id="PTHR43804">
    <property type="entry name" value="LD18447P"/>
    <property type="match status" value="1"/>
</dbReference>
<dbReference type="PANTHER" id="PTHR43804:SF7">
    <property type="entry name" value="LD18447P"/>
    <property type="match status" value="1"/>
</dbReference>
<dbReference type="Pfam" id="PF03462">
    <property type="entry name" value="PCRF"/>
    <property type="match status" value="1"/>
</dbReference>
<dbReference type="Pfam" id="PF00472">
    <property type="entry name" value="RF-1"/>
    <property type="match status" value="1"/>
</dbReference>
<dbReference type="SMART" id="SM00937">
    <property type="entry name" value="PCRF"/>
    <property type="match status" value="1"/>
</dbReference>
<dbReference type="SUPFAM" id="SSF75620">
    <property type="entry name" value="Release factor"/>
    <property type="match status" value="1"/>
</dbReference>
<dbReference type="PROSITE" id="PS00745">
    <property type="entry name" value="RF_PROK_I"/>
    <property type="match status" value="1"/>
</dbReference>
<accession>B3PJP4</accession>
<gene>
    <name evidence="1" type="primary">prfA</name>
    <name type="ordered locus">CJA_0652</name>
</gene>